<proteinExistence type="inferred from homology"/>
<organism>
    <name type="scientific">Glaesserella parasuis serovar 5 (strain SH0165)</name>
    <name type="common">Haemophilus parasuis</name>
    <dbReference type="NCBI Taxonomy" id="557723"/>
    <lineage>
        <taxon>Bacteria</taxon>
        <taxon>Pseudomonadati</taxon>
        <taxon>Pseudomonadota</taxon>
        <taxon>Gammaproteobacteria</taxon>
        <taxon>Pasteurellales</taxon>
        <taxon>Pasteurellaceae</taxon>
        <taxon>Glaesserella</taxon>
    </lineage>
</organism>
<sequence>MNQLDALRQMTVVVADTGDIDAIKAYQPEDATTNPSLVLSASALPQYAPLIDEAIAYAKAKSNDKAQQLIDAEDKLAVNIGLEILKVVKGRISTEVDARYSYDTEKTIAKARKLIALYNEAGISNDRILIKIASTWQGIKAAEQLEKEGINCNLTLLFSQAQARACAEAGVYLISPFVGRILDWYKANSDKKEYAPAEDPGVVSVTSIYNYYKQHGYNTVVMGASFRNAGEITELAGCDRLTIAPALLKELQESEAPLVRKLEYKGEVKARPAPMTEAEFYWEHNQDPMAVEKLAEGIRKFAIDQEKLEAMLLAKF</sequence>
<comment type="function">
    <text evidence="2">Transaldolase is important for the balance of metabolites in the pentose-phosphate pathway.</text>
</comment>
<comment type="catalytic activity">
    <reaction evidence="2">
        <text>D-sedoheptulose 7-phosphate + D-glyceraldehyde 3-phosphate = D-erythrose 4-phosphate + beta-D-fructose 6-phosphate</text>
        <dbReference type="Rhea" id="RHEA:17053"/>
        <dbReference type="ChEBI" id="CHEBI:16897"/>
        <dbReference type="ChEBI" id="CHEBI:57483"/>
        <dbReference type="ChEBI" id="CHEBI:57634"/>
        <dbReference type="ChEBI" id="CHEBI:59776"/>
        <dbReference type="EC" id="2.2.1.2"/>
    </reaction>
</comment>
<comment type="pathway">
    <text evidence="2">Carbohydrate degradation; pentose phosphate pathway; D-glyceraldehyde 3-phosphate and beta-D-fructose 6-phosphate from D-ribose 5-phosphate and D-xylulose 5-phosphate (non-oxidative stage): step 2/3.</text>
</comment>
<comment type="subunit">
    <text evidence="1">Homodimer.</text>
</comment>
<comment type="subcellular location">
    <subcellularLocation>
        <location evidence="2">Cytoplasm</location>
    </subcellularLocation>
</comment>
<comment type="similarity">
    <text evidence="2">Belongs to the transaldolase family. Type 1 subfamily.</text>
</comment>
<evidence type="ECO:0000250" key="1"/>
<evidence type="ECO:0000255" key="2">
    <source>
        <dbReference type="HAMAP-Rule" id="MF_00492"/>
    </source>
</evidence>
<protein>
    <recommendedName>
        <fullName evidence="2">Transaldolase</fullName>
        <ecNumber evidence="2">2.2.1.2</ecNumber>
    </recommendedName>
</protein>
<keyword id="KW-0963">Cytoplasm</keyword>
<keyword id="KW-0570">Pentose shunt</keyword>
<keyword id="KW-1185">Reference proteome</keyword>
<keyword id="KW-0704">Schiff base</keyword>
<keyword id="KW-0808">Transferase</keyword>
<gene>
    <name evidence="2" type="primary">tal</name>
    <name type="ordered locus">HAPS_1036</name>
</gene>
<feature type="chain" id="PRO_1000198454" description="Transaldolase">
    <location>
        <begin position="1"/>
        <end position="316"/>
    </location>
</feature>
<feature type="active site" description="Schiff-base intermediate with substrate" evidence="2">
    <location>
        <position position="131"/>
    </location>
</feature>
<name>TAL_GLAP5</name>
<dbReference type="EC" id="2.2.1.2" evidence="2"/>
<dbReference type="EMBL" id="CP001321">
    <property type="protein sequence ID" value="ACL32655.1"/>
    <property type="molecule type" value="Genomic_DNA"/>
</dbReference>
<dbReference type="RefSeq" id="WP_010786288.1">
    <property type="nucleotide sequence ID" value="NC_011852.1"/>
</dbReference>
<dbReference type="SMR" id="B8F5Q3"/>
<dbReference type="STRING" id="557723.HAPS_1036"/>
<dbReference type="GeneID" id="66617998"/>
<dbReference type="KEGG" id="hap:HAPS_1036"/>
<dbReference type="PATRIC" id="fig|557723.8.peg.1031"/>
<dbReference type="HOGENOM" id="CLU_047470_0_1_6"/>
<dbReference type="UniPathway" id="UPA00115">
    <property type="reaction ID" value="UER00414"/>
</dbReference>
<dbReference type="Proteomes" id="UP000006743">
    <property type="component" value="Chromosome"/>
</dbReference>
<dbReference type="GO" id="GO:0005829">
    <property type="term" value="C:cytosol"/>
    <property type="evidence" value="ECO:0007669"/>
    <property type="project" value="TreeGrafter"/>
</dbReference>
<dbReference type="GO" id="GO:0004801">
    <property type="term" value="F:transaldolase activity"/>
    <property type="evidence" value="ECO:0000250"/>
    <property type="project" value="UniProtKB"/>
</dbReference>
<dbReference type="GO" id="GO:0005975">
    <property type="term" value="P:carbohydrate metabolic process"/>
    <property type="evidence" value="ECO:0007669"/>
    <property type="project" value="InterPro"/>
</dbReference>
<dbReference type="GO" id="GO:0006098">
    <property type="term" value="P:pentose-phosphate shunt"/>
    <property type="evidence" value="ECO:0007669"/>
    <property type="project" value="UniProtKB-UniRule"/>
</dbReference>
<dbReference type="CDD" id="cd00957">
    <property type="entry name" value="Transaldolase_TalAB"/>
    <property type="match status" value="1"/>
</dbReference>
<dbReference type="FunFam" id="3.20.20.70:FF:000002">
    <property type="entry name" value="Transaldolase"/>
    <property type="match status" value="1"/>
</dbReference>
<dbReference type="Gene3D" id="3.20.20.70">
    <property type="entry name" value="Aldolase class I"/>
    <property type="match status" value="1"/>
</dbReference>
<dbReference type="HAMAP" id="MF_00492">
    <property type="entry name" value="Transaldolase_1"/>
    <property type="match status" value="1"/>
</dbReference>
<dbReference type="InterPro" id="IPR013785">
    <property type="entry name" value="Aldolase_TIM"/>
</dbReference>
<dbReference type="InterPro" id="IPR001585">
    <property type="entry name" value="TAL/FSA"/>
</dbReference>
<dbReference type="InterPro" id="IPR004730">
    <property type="entry name" value="Transaldolase_1"/>
</dbReference>
<dbReference type="InterPro" id="IPR018225">
    <property type="entry name" value="Transaldolase_AS"/>
</dbReference>
<dbReference type="NCBIfam" id="NF009001">
    <property type="entry name" value="PRK12346.1"/>
    <property type="match status" value="1"/>
</dbReference>
<dbReference type="NCBIfam" id="TIGR00874">
    <property type="entry name" value="talAB"/>
    <property type="match status" value="1"/>
</dbReference>
<dbReference type="PANTHER" id="PTHR10683">
    <property type="entry name" value="TRANSALDOLASE"/>
    <property type="match status" value="1"/>
</dbReference>
<dbReference type="PANTHER" id="PTHR10683:SF18">
    <property type="entry name" value="TRANSALDOLASE"/>
    <property type="match status" value="1"/>
</dbReference>
<dbReference type="Pfam" id="PF00923">
    <property type="entry name" value="TAL_FSA"/>
    <property type="match status" value="1"/>
</dbReference>
<dbReference type="SUPFAM" id="SSF51569">
    <property type="entry name" value="Aldolase"/>
    <property type="match status" value="1"/>
</dbReference>
<dbReference type="PROSITE" id="PS01054">
    <property type="entry name" value="TRANSALDOLASE_1"/>
    <property type="match status" value="1"/>
</dbReference>
<dbReference type="PROSITE" id="PS00958">
    <property type="entry name" value="TRANSALDOLASE_2"/>
    <property type="match status" value="1"/>
</dbReference>
<accession>B8F5Q3</accession>
<reference key="1">
    <citation type="journal article" date="2009" name="J. Bacteriol.">
        <title>Complete genome sequence of Haemophilus parasuis SH0165.</title>
        <authorList>
            <person name="Yue M."/>
            <person name="Yang F."/>
            <person name="Yang J."/>
            <person name="Bei W."/>
            <person name="Cai X."/>
            <person name="Chen L."/>
            <person name="Dong J."/>
            <person name="Zhou R."/>
            <person name="Jin M."/>
            <person name="Jin Q."/>
            <person name="Chen H."/>
        </authorList>
    </citation>
    <scope>NUCLEOTIDE SEQUENCE [LARGE SCALE GENOMIC DNA]</scope>
    <source>
        <strain>SH0165</strain>
    </source>
</reference>